<keyword id="KW-0067">ATP-binding</keyword>
<keyword id="KW-0963">Cytoplasm</keyword>
<keyword id="KW-0418">Kinase</keyword>
<keyword id="KW-0460">Magnesium</keyword>
<keyword id="KW-0479">Metal-binding</keyword>
<keyword id="KW-0546">Nucleotide metabolism</keyword>
<keyword id="KW-0547">Nucleotide-binding</keyword>
<keyword id="KW-0597">Phosphoprotein</keyword>
<keyword id="KW-1185">Reference proteome</keyword>
<keyword id="KW-0808">Transferase</keyword>
<protein>
    <recommendedName>
        <fullName evidence="1">Nucleoside diphosphate kinase</fullName>
        <shortName evidence="1">NDK</shortName>
        <shortName evidence="1">NDP kinase</shortName>
        <ecNumber evidence="1">2.7.4.6</ecNumber>
    </recommendedName>
    <alternativeName>
        <fullName evidence="1">Nucleoside-2-P kinase</fullName>
    </alternativeName>
</protein>
<name>NDK_PROM4</name>
<organism>
    <name type="scientific">Prochlorococcus marinus (strain MIT 9211)</name>
    <dbReference type="NCBI Taxonomy" id="93059"/>
    <lineage>
        <taxon>Bacteria</taxon>
        <taxon>Bacillati</taxon>
        <taxon>Cyanobacteriota</taxon>
        <taxon>Cyanophyceae</taxon>
        <taxon>Synechococcales</taxon>
        <taxon>Prochlorococcaceae</taxon>
        <taxon>Prochlorococcus</taxon>
    </lineage>
</organism>
<reference key="1">
    <citation type="journal article" date="2007" name="PLoS Genet.">
        <title>Patterns and implications of gene gain and loss in the evolution of Prochlorococcus.</title>
        <authorList>
            <person name="Kettler G.C."/>
            <person name="Martiny A.C."/>
            <person name="Huang K."/>
            <person name="Zucker J."/>
            <person name="Coleman M.L."/>
            <person name="Rodrigue S."/>
            <person name="Chen F."/>
            <person name="Lapidus A."/>
            <person name="Ferriera S."/>
            <person name="Johnson J."/>
            <person name="Steglich C."/>
            <person name="Church G.M."/>
            <person name="Richardson P."/>
            <person name="Chisholm S.W."/>
        </authorList>
    </citation>
    <scope>NUCLEOTIDE SEQUENCE [LARGE SCALE GENOMIC DNA]</scope>
    <source>
        <strain>MIT 9211</strain>
    </source>
</reference>
<dbReference type="EC" id="2.7.4.6" evidence="1"/>
<dbReference type="EMBL" id="CP000878">
    <property type="protein sequence ID" value="ABX07984.1"/>
    <property type="molecule type" value="Genomic_DNA"/>
</dbReference>
<dbReference type="RefSeq" id="WP_012194609.1">
    <property type="nucleotide sequence ID" value="NC_009976.1"/>
</dbReference>
<dbReference type="SMR" id="A9B9E7"/>
<dbReference type="STRING" id="93059.P9211_00531"/>
<dbReference type="KEGG" id="pmj:P9211_00531"/>
<dbReference type="eggNOG" id="COG0105">
    <property type="taxonomic scope" value="Bacteria"/>
</dbReference>
<dbReference type="HOGENOM" id="CLU_060216_6_3_3"/>
<dbReference type="OrthoDB" id="9801161at2"/>
<dbReference type="Proteomes" id="UP000000788">
    <property type="component" value="Chromosome"/>
</dbReference>
<dbReference type="GO" id="GO:0005737">
    <property type="term" value="C:cytoplasm"/>
    <property type="evidence" value="ECO:0007669"/>
    <property type="project" value="UniProtKB-SubCell"/>
</dbReference>
<dbReference type="GO" id="GO:0005524">
    <property type="term" value="F:ATP binding"/>
    <property type="evidence" value="ECO:0007669"/>
    <property type="project" value="UniProtKB-UniRule"/>
</dbReference>
<dbReference type="GO" id="GO:0046872">
    <property type="term" value="F:metal ion binding"/>
    <property type="evidence" value="ECO:0007669"/>
    <property type="project" value="UniProtKB-KW"/>
</dbReference>
<dbReference type="GO" id="GO:0004550">
    <property type="term" value="F:nucleoside diphosphate kinase activity"/>
    <property type="evidence" value="ECO:0007669"/>
    <property type="project" value="UniProtKB-UniRule"/>
</dbReference>
<dbReference type="GO" id="GO:0006241">
    <property type="term" value="P:CTP biosynthetic process"/>
    <property type="evidence" value="ECO:0007669"/>
    <property type="project" value="UniProtKB-UniRule"/>
</dbReference>
<dbReference type="GO" id="GO:0006183">
    <property type="term" value="P:GTP biosynthetic process"/>
    <property type="evidence" value="ECO:0007669"/>
    <property type="project" value="UniProtKB-UniRule"/>
</dbReference>
<dbReference type="GO" id="GO:0006228">
    <property type="term" value="P:UTP biosynthetic process"/>
    <property type="evidence" value="ECO:0007669"/>
    <property type="project" value="UniProtKB-UniRule"/>
</dbReference>
<dbReference type="CDD" id="cd04413">
    <property type="entry name" value="NDPk_I"/>
    <property type="match status" value="1"/>
</dbReference>
<dbReference type="FunFam" id="3.30.70.141:FF:000002">
    <property type="entry name" value="Nucleoside diphosphate kinase"/>
    <property type="match status" value="1"/>
</dbReference>
<dbReference type="Gene3D" id="3.30.70.141">
    <property type="entry name" value="Nucleoside diphosphate kinase-like domain"/>
    <property type="match status" value="1"/>
</dbReference>
<dbReference type="HAMAP" id="MF_00451">
    <property type="entry name" value="NDP_kinase"/>
    <property type="match status" value="1"/>
</dbReference>
<dbReference type="InterPro" id="IPR034907">
    <property type="entry name" value="NDK-like_dom"/>
</dbReference>
<dbReference type="InterPro" id="IPR036850">
    <property type="entry name" value="NDK-like_dom_sf"/>
</dbReference>
<dbReference type="InterPro" id="IPR001564">
    <property type="entry name" value="Nucleoside_diP_kinase"/>
</dbReference>
<dbReference type="InterPro" id="IPR023005">
    <property type="entry name" value="Nucleoside_diP_kinase_AS"/>
</dbReference>
<dbReference type="NCBIfam" id="NF001908">
    <property type="entry name" value="PRK00668.1"/>
    <property type="match status" value="1"/>
</dbReference>
<dbReference type="PANTHER" id="PTHR11349">
    <property type="entry name" value="NUCLEOSIDE DIPHOSPHATE KINASE"/>
    <property type="match status" value="1"/>
</dbReference>
<dbReference type="Pfam" id="PF00334">
    <property type="entry name" value="NDK"/>
    <property type="match status" value="1"/>
</dbReference>
<dbReference type="PRINTS" id="PR01243">
    <property type="entry name" value="NUCDPKINASE"/>
</dbReference>
<dbReference type="SMART" id="SM00562">
    <property type="entry name" value="NDK"/>
    <property type="match status" value="1"/>
</dbReference>
<dbReference type="SUPFAM" id="SSF54919">
    <property type="entry name" value="Nucleoside diphosphate kinase, NDK"/>
    <property type="match status" value="1"/>
</dbReference>
<dbReference type="PROSITE" id="PS00469">
    <property type="entry name" value="NDPK"/>
    <property type="match status" value="1"/>
</dbReference>
<dbReference type="PROSITE" id="PS51374">
    <property type="entry name" value="NDPK_LIKE"/>
    <property type="match status" value="1"/>
</dbReference>
<comment type="function">
    <text evidence="1">Major role in the synthesis of nucleoside triphosphates other than ATP. The ATP gamma phosphate is transferred to the NDP beta phosphate via a ping-pong mechanism, using a phosphorylated active-site intermediate.</text>
</comment>
<comment type="catalytic activity">
    <reaction evidence="1">
        <text>a 2'-deoxyribonucleoside 5'-diphosphate + ATP = a 2'-deoxyribonucleoside 5'-triphosphate + ADP</text>
        <dbReference type="Rhea" id="RHEA:44640"/>
        <dbReference type="ChEBI" id="CHEBI:30616"/>
        <dbReference type="ChEBI" id="CHEBI:61560"/>
        <dbReference type="ChEBI" id="CHEBI:73316"/>
        <dbReference type="ChEBI" id="CHEBI:456216"/>
        <dbReference type="EC" id="2.7.4.6"/>
    </reaction>
</comment>
<comment type="catalytic activity">
    <reaction evidence="1">
        <text>a ribonucleoside 5'-diphosphate + ATP = a ribonucleoside 5'-triphosphate + ADP</text>
        <dbReference type="Rhea" id="RHEA:18113"/>
        <dbReference type="ChEBI" id="CHEBI:30616"/>
        <dbReference type="ChEBI" id="CHEBI:57930"/>
        <dbReference type="ChEBI" id="CHEBI:61557"/>
        <dbReference type="ChEBI" id="CHEBI:456216"/>
        <dbReference type="EC" id="2.7.4.6"/>
    </reaction>
</comment>
<comment type="cofactor">
    <cofactor evidence="1">
        <name>Mg(2+)</name>
        <dbReference type="ChEBI" id="CHEBI:18420"/>
    </cofactor>
</comment>
<comment type="subunit">
    <text evidence="1">Homotetramer.</text>
</comment>
<comment type="subcellular location">
    <subcellularLocation>
        <location evidence="1">Cytoplasm</location>
    </subcellularLocation>
</comment>
<comment type="similarity">
    <text evidence="1">Belongs to the NDK family.</text>
</comment>
<evidence type="ECO:0000255" key="1">
    <source>
        <dbReference type="HAMAP-Rule" id="MF_00451"/>
    </source>
</evidence>
<feature type="chain" id="PRO_1000125000" description="Nucleoside diphosphate kinase">
    <location>
        <begin position="1"/>
        <end position="151"/>
    </location>
</feature>
<feature type="active site" description="Pros-phosphohistidine intermediate" evidence="1">
    <location>
        <position position="117"/>
    </location>
</feature>
<feature type="binding site" evidence="1">
    <location>
        <position position="11"/>
    </location>
    <ligand>
        <name>ATP</name>
        <dbReference type="ChEBI" id="CHEBI:30616"/>
    </ligand>
</feature>
<feature type="binding site" evidence="1">
    <location>
        <position position="59"/>
    </location>
    <ligand>
        <name>ATP</name>
        <dbReference type="ChEBI" id="CHEBI:30616"/>
    </ligand>
</feature>
<feature type="binding site" evidence="1">
    <location>
        <position position="87"/>
    </location>
    <ligand>
        <name>ATP</name>
        <dbReference type="ChEBI" id="CHEBI:30616"/>
    </ligand>
</feature>
<feature type="binding site" evidence="1">
    <location>
        <position position="93"/>
    </location>
    <ligand>
        <name>ATP</name>
        <dbReference type="ChEBI" id="CHEBI:30616"/>
    </ligand>
</feature>
<feature type="binding site" evidence="1">
    <location>
        <position position="104"/>
    </location>
    <ligand>
        <name>ATP</name>
        <dbReference type="ChEBI" id="CHEBI:30616"/>
    </ligand>
</feature>
<feature type="binding site" evidence="1">
    <location>
        <position position="114"/>
    </location>
    <ligand>
        <name>ATP</name>
        <dbReference type="ChEBI" id="CHEBI:30616"/>
    </ligand>
</feature>
<gene>
    <name evidence="1" type="primary">ndk</name>
    <name type="ordered locus">P9211_00531</name>
</gene>
<accession>A9B9E7</accession>
<proteinExistence type="inferred from homology"/>
<sequence length="151" mass="16726">MVAERTFLAIKPDGVQRGLVGEILSRFERKGFKLIALKQLIPSRALAEQHYGVHRERPFFKGLVDFITSGPVIAMIWEGEGVILGARKLIGSTKPLDADPGTIRGDLAIDIGRNVIHGSDGPETASFEIGLWFESSELSDWNPSDQLWRVE</sequence>